<keyword id="KW-1015">Disulfide bond</keyword>
<keyword id="KW-0378">Hydrolase</keyword>
<keyword id="KW-0479">Metal-binding</keyword>
<keyword id="KW-0482">Metalloprotease</keyword>
<keyword id="KW-0574">Periplasm</keyword>
<keyword id="KW-0645">Protease</keyword>
<keyword id="KW-1185">Reference proteome</keyword>
<keyword id="KW-0732">Signal</keyword>
<keyword id="KW-0862">Zinc</keyword>
<comment type="function">
    <text evidence="1">Murein endopeptidase that cleaves the D-alanyl-meso-2,6-diamino-pimelyl amide bond that connects peptidoglycan strands. Likely plays a role in the removal of murein from the sacculus.</text>
</comment>
<comment type="cofactor">
    <cofactor evidence="1">
        <name>Zn(2+)</name>
        <dbReference type="ChEBI" id="CHEBI:29105"/>
    </cofactor>
    <text evidence="1">Binds 2 Zn(2+) ions per subunit. Zn(2+) ion 1 is bound in the active site. Zn(2+) ion 2 is bound at the dimer interface by residues from both subunits.</text>
</comment>
<comment type="subunit">
    <text evidence="1">Dimer.</text>
</comment>
<comment type="subcellular location">
    <subcellularLocation>
        <location evidence="1">Periplasm</location>
    </subcellularLocation>
</comment>
<comment type="similarity">
    <text evidence="1">Belongs to the peptidase M74 family.</text>
</comment>
<gene>
    <name evidence="1" type="primary">mepA</name>
    <name type="ordered locus">SARI_00517</name>
</gene>
<sequence length="274" mass="30231">MKKTAIALLAWFVSSASLAATPWQKITHPVPGAAQSVGSFANGCIIGADTLPVQSDNYQVMRTDQRRYFGHPDLVMFIQRLSHQAHQRGLGTVLIGDMGMPAGGRFNGGHASHQTGLDVDIFLQLPKTRWSQAQLLRPQALDLVSRDGKHVVPSRWSSDIASLIKLAAEDNDVTRIFVNPAIKQQLCLDAGSDRDWLRKVRPWFQHRAHMHVRLRCPADSLECEDQPLPPPGDGCGAELQSWFEPPKPGTTKPEKKTPPPLPPSCQALLDEHVL</sequence>
<protein>
    <recommendedName>
        <fullName evidence="1">Penicillin-insensitive murein endopeptidase</fullName>
        <ecNumber evidence="1">3.4.24.-</ecNumber>
    </recommendedName>
    <alternativeName>
        <fullName evidence="1">D-alanyl-D-alanine-endopeptidase</fullName>
        <shortName evidence="1">DD-endopeptidase</shortName>
    </alternativeName>
</protein>
<evidence type="ECO:0000255" key="1">
    <source>
        <dbReference type="HAMAP-Rule" id="MF_01623"/>
    </source>
</evidence>
<evidence type="ECO:0000256" key="2">
    <source>
        <dbReference type="SAM" id="MobiDB-lite"/>
    </source>
</evidence>
<reference key="1">
    <citation type="submission" date="2007-11" db="EMBL/GenBank/DDBJ databases">
        <authorList>
            <consortium name="The Salmonella enterica serovar Arizonae Genome Sequencing Project"/>
            <person name="McClelland M."/>
            <person name="Sanderson E.K."/>
            <person name="Porwollik S."/>
            <person name="Spieth J."/>
            <person name="Clifton W.S."/>
            <person name="Fulton R."/>
            <person name="Chunyan W."/>
            <person name="Wollam A."/>
            <person name="Shah N."/>
            <person name="Pepin K."/>
            <person name="Bhonagiri V."/>
            <person name="Nash W."/>
            <person name="Johnson M."/>
            <person name="Thiruvilangam P."/>
            <person name="Wilson R."/>
        </authorList>
    </citation>
    <scope>NUCLEOTIDE SEQUENCE [LARGE SCALE GENOMIC DNA]</scope>
    <source>
        <strain>ATCC BAA-731 / CDC346-86 / RSK2980</strain>
    </source>
</reference>
<feature type="signal peptide" evidence="1">
    <location>
        <begin position="1"/>
        <end position="19"/>
    </location>
</feature>
<feature type="chain" id="PRO_1000088093" description="Penicillin-insensitive murein endopeptidase">
    <location>
        <begin position="20"/>
        <end position="274"/>
    </location>
</feature>
<feature type="region of interest" description="Disordered" evidence="2">
    <location>
        <begin position="225"/>
        <end position="274"/>
    </location>
</feature>
<feature type="binding site" evidence="1">
    <location>
        <position position="110"/>
    </location>
    <ligand>
        <name>Zn(2+)</name>
        <dbReference type="ChEBI" id="CHEBI:29105"/>
        <label>1</label>
    </ligand>
</feature>
<feature type="binding site" evidence="1">
    <location>
        <position position="113"/>
    </location>
    <ligand>
        <name>Zn(2+)</name>
        <dbReference type="ChEBI" id="CHEBI:29105"/>
        <label>1</label>
    </ligand>
</feature>
<feature type="binding site" evidence="1">
    <location>
        <position position="120"/>
    </location>
    <ligand>
        <name>Zn(2+)</name>
        <dbReference type="ChEBI" id="CHEBI:29105"/>
        <label>1</label>
    </ligand>
</feature>
<feature type="binding site" evidence="1">
    <location>
        <position position="147"/>
    </location>
    <ligand>
        <name>Zn(2+)</name>
        <dbReference type="ChEBI" id="CHEBI:29105"/>
        <label>2</label>
    </ligand>
</feature>
<feature type="binding site" evidence="1">
    <location>
        <position position="150"/>
    </location>
    <ligand>
        <name>Zn(2+)</name>
        <dbReference type="ChEBI" id="CHEBI:29105"/>
        <label>2</label>
    </ligand>
</feature>
<feature type="binding site" evidence="1">
    <location>
        <position position="211"/>
    </location>
    <ligand>
        <name>Zn(2+)</name>
        <dbReference type="ChEBI" id="CHEBI:29105"/>
        <label>1</label>
    </ligand>
</feature>
<feature type="disulfide bond" evidence="1">
    <location>
        <begin position="44"/>
        <end position="265"/>
    </location>
</feature>
<feature type="disulfide bond" evidence="1">
    <location>
        <begin position="187"/>
        <end position="235"/>
    </location>
</feature>
<feature type="disulfide bond" evidence="1">
    <location>
        <begin position="216"/>
        <end position="223"/>
    </location>
</feature>
<organism>
    <name type="scientific">Salmonella arizonae (strain ATCC BAA-731 / CDC346-86 / RSK2980)</name>
    <dbReference type="NCBI Taxonomy" id="41514"/>
    <lineage>
        <taxon>Bacteria</taxon>
        <taxon>Pseudomonadati</taxon>
        <taxon>Pseudomonadota</taxon>
        <taxon>Gammaproteobacteria</taxon>
        <taxon>Enterobacterales</taxon>
        <taxon>Enterobacteriaceae</taxon>
        <taxon>Salmonella</taxon>
    </lineage>
</organism>
<proteinExistence type="inferred from homology"/>
<name>MEPA_SALAR</name>
<dbReference type="EC" id="3.4.24.-" evidence="1"/>
<dbReference type="EMBL" id="CP000880">
    <property type="protein sequence ID" value="ABX20443.1"/>
    <property type="molecule type" value="Genomic_DNA"/>
</dbReference>
<dbReference type="SMR" id="A9MJ43"/>
<dbReference type="STRING" id="41514.SARI_00517"/>
<dbReference type="MEROPS" id="M74.001"/>
<dbReference type="KEGG" id="ses:SARI_00517"/>
<dbReference type="HOGENOM" id="CLU_052496_0_0_6"/>
<dbReference type="Proteomes" id="UP000002084">
    <property type="component" value="Chromosome"/>
</dbReference>
<dbReference type="GO" id="GO:0030288">
    <property type="term" value="C:outer membrane-bounded periplasmic space"/>
    <property type="evidence" value="ECO:0007669"/>
    <property type="project" value="InterPro"/>
</dbReference>
<dbReference type="GO" id="GO:0046872">
    <property type="term" value="F:metal ion binding"/>
    <property type="evidence" value="ECO:0007669"/>
    <property type="project" value="UniProtKB-KW"/>
</dbReference>
<dbReference type="GO" id="GO:0004222">
    <property type="term" value="F:metalloendopeptidase activity"/>
    <property type="evidence" value="ECO:0007669"/>
    <property type="project" value="UniProtKB-UniRule"/>
</dbReference>
<dbReference type="GO" id="GO:0004252">
    <property type="term" value="F:serine-type endopeptidase activity"/>
    <property type="evidence" value="ECO:0007669"/>
    <property type="project" value="InterPro"/>
</dbReference>
<dbReference type="GO" id="GO:0000270">
    <property type="term" value="P:peptidoglycan metabolic process"/>
    <property type="evidence" value="ECO:0007669"/>
    <property type="project" value="UniProtKB-UniRule"/>
</dbReference>
<dbReference type="GO" id="GO:0006508">
    <property type="term" value="P:proteolysis"/>
    <property type="evidence" value="ECO:0007669"/>
    <property type="project" value="UniProtKB-KW"/>
</dbReference>
<dbReference type="FunFam" id="3.30.1380.10:FF:000002">
    <property type="entry name" value="Penicillin-insensitive murein endopeptidase"/>
    <property type="match status" value="1"/>
</dbReference>
<dbReference type="Gene3D" id="3.30.1380.10">
    <property type="match status" value="1"/>
</dbReference>
<dbReference type="HAMAP" id="MF_01623">
    <property type="entry name" value="MepA"/>
    <property type="match status" value="1"/>
</dbReference>
<dbReference type="InterPro" id="IPR009045">
    <property type="entry name" value="Hedgehog_sig/DD-Pept_Zn-bd_sf"/>
</dbReference>
<dbReference type="InterPro" id="IPR005073">
    <property type="entry name" value="Peptidase_M74"/>
</dbReference>
<dbReference type="NCBIfam" id="NF006947">
    <property type="entry name" value="PRK09429.1"/>
    <property type="match status" value="1"/>
</dbReference>
<dbReference type="Pfam" id="PF03411">
    <property type="entry name" value="Peptidase_M74"/>
    <property type="match status" value="1"/>
</dbReference>
<dbReference type="PIRSF" id="PIRSF018455">
    <property type="entry name" value="MepA"/>
    <property type="match status" value="1"/>
</dbReference>
<dbReference type="SUPFAM" id="SSF55166">
    <property type="entry name" value="Hedgehog/DD-peptidase"/>
    <property type="match status" value="1"/>
</dbReference>
<accession>A9MJ43</accession>